<gene>
    <name evidence="1" type="primary">murG</name>
    <name type="ordered locus">Spro_0761</name>
</gene>
<organism>
    <name type="scientific">Serratia proteamaculans (strain 568)</name>
    <dbReference type="NCBI Taxonomy" id="399741"/>
    <lineage>
        <taxon>Bacteria</taxon>
        <taxon>Pseudomonadati</taxon>
        <taxon>Pseudomonadota</taxon>
        <taxon>Gammaproteobacteria</taxon>
        <taxon>Enterobacterales</taxon>
        <taxon>Yersiniaceae</taxon>
        <taxon>Serratia</taxon>
    </lineage>
</organism>
<dbReference type="EC" id="2.4.1.227" evidence="1"/>
<dbReference type="EMBL" id="CP000826">
    <property type="protein sequence ID" value="ABV39867.1"/>
    <property type="molecule type" value="Genomic_DNA"/>
</dbReference>
<dbReference type="SMR" id="A8G9S7"/>
<dbReference type="STRING" id="399741.Spro_0761"/>
<dbReference type="CAZy" id="GT28">
    <property type="family name" value="Glycosyltransferase Family 28"/>
</dbReference>
<dbReference type="KEGG" id="spe:Spro_0761"/>
<dbReference type="eggNOG" id="COG0707">
    <property type="taxonomic scope" value="Bacteria"/>
</dbReference>
<dbReference type="HOGENOM" id="CLU_037404_2_0_6"/>
<dbReference type="OrthoDB" id="9808936at2"/>
<dbReference type="UniPathway" id="UPA00219"/>
<dbReference type="GO" id="GO:0005886">
    <property type="term" value="C:plasma membrane"/>
    <property type="evidence" value="ECO:0007669"/>
    <property type="project" value="UniProtKB-SubCell"/>
</dbReference>
<dbReference type="GO" id="GO:0051991">
    <property type="term" value="F:UDP-N-acetyl-D-glucosamine:N-acetylmuramoyl-L-alanyl-D-glutamyl-meso-2,6-diaminopimelyl-D-alanyl-D-alanine-diphosphoundecaprenol 4-beta-N-acetylglucosaminlytransferase activity"/>
    <property type="evidence" value="ECO:0007669"/>
    <property type="project" value="RHEA"/>
</dbReference>
<dbReference type="GO" id="GO:0050511">
    <property type="term" value="F:undecaprenyldiphospho-muramoylpentapeptide beta-N-acetylglucosaminyltransferase activity"/>
    <property type="evidence" value="ECO:0007669"/>
    <property type="project" value="UniProtKB-UniRule"/>
</dbReference>
<dbReference type="GO" id="GO:0005975">
    <property type="term" value="P:carbohydrate metabolic process"/>
    <property type="evidence" value="ECO:0007669"/>
    <property type="project" value="InterPro"/>
</dbReference>
<dbReference type="GO" id="GO:0051301">
    <property type="term" value="P:cell division"/>
    <property type="evidence" value="ECO:0007669"/>
    <property type="project" value="UniProtKB-KW"/>
</dbReference>
<dbReference type="GO" id="GO:0071555">
    <property type="term" value="P:cell wall organization"/>
    <property type="evidence" value="ECO:0007669"/>
    <property type="project" value="UniProtKB-KW"/>
</dbReference>
<dbReference type="GO" id="GO:0030259">
    <property type="term" value="P:lipid glycosylation"/>
    <property type="evidence" value="ECO:0007669"/>
    <property type="project" value="UniProtKB-UniRule"/>
</dbReference>
<dbReference type="GO" id="GO:0009252">
    <property type="term" value="P:peptidoglycan biosynthetic process"/>
    <property type="evidence" value="ECO:0007669"/>
    <property type="project" value="UniProtKB-UniRule"/>
</dbReference>
<dbReference type="GO" id="GO:0008360">
    <property type="term" value="P:regulation of cell shape"/>
    <property type="evidence" value="ECO:0007669"/>
    <property type="project" value="UniProtKB-KW"/>
</dbReference>
<dbReference type="CDD" id="cd03785">
    <property type="entry name" value="GT28_MurG"/>
    <property type="match status" value="1"/>
</dbReference>
<dbReference type="FunFam" id="3.40.50.2000:FF:000016">
    <property type="entry name" value="UDP-N-acetylglucosamine--N-acetylmuramyl-(pentapeptide) pyrophosphoryl-undecaprenol N-acetylglucosamine transferase"/>
    <property type="match status" value="1"/>
</dbReference>
<dbReference type="FunFam" id="3.40.50.2000:FF:000018">
    <property type="entry name" value="UDP-N-acetylglucosamine--N-acetylmuramyl-(pentapeptide) pyrophosphoryl-undecaprenol N-acetylglucosamine transferase"/>
    <property type="match status" value="1"/>
</dbReference>
<dbReference type="Gene3D" id="3.40.50.2000">
    <property type="entry name" value="Glycogen Phosphorylase B"/>
    <property type="match status" value="2"/>
</dbReference>
<dbReference type="HAMAP" id="MF_00033">
    <property type="entry name" value="MurG"/>
    <property type="match status" value="1"/>
</dbReference>
<dbReference type="InterPro" id="IPR006009">
    <property type="entry name" value="GlcNAc_MurG"/>
</dbReference>
<dbReference type="InterPro" id="IPR007235">
    <property type="entry name" value="Glyco_trans_28_C"/>
</dbReference>
<dbReference type="InterPro" id="IPR004276">
    <property type="entry name" value="GlycoTrans_28_N"/>
</dbReference>
<dbReference type="NCBIfam" id="TIGR01133">
    <property type="entry name" value="murG"/>
    <property type="match status" value="1"/>
</dbReference>
<dbReference type="PANTHER" id="PTHR21015:SF22">
    <property type="entry name" value="GLYCOSYLTRANSFERASE"/>
    <property type="match status" value="1"/>
</dbReference>
<dbReference type="PANTHER" id="PTHR21015">
    <property type="entry name" value="UDP-N-ACETYLGLUCOSAMINE--N-ACETYLMURAMYL-(PENTAPEPTIDE) PYROPHOSPHORYL-UNDECAPRENOL N-ACETYLGLUCOSAMINE TRANSFERASE 1"/>
    <property type="match status" value="1"/>
</dbReference>
<dbReference type="Pfam" id="PF04101">
    <property type="entry name" value="Glyco_tran_28_C"/>
    <property type="match status" value="1"/>
</dbReference>
<dbReference type="Pfam" id="PF03033">
    <property type="entry name" value="Glyco_transf_28"/>
    <property type="match status" value="1"/>
</dbReference>
<dbReference type="SUPFAM" id="SSF53756">
    <property type="entry name" value="UDP-Glycosyltransferase/glycogen phosphorylase"/>
    <property type="match status" value="1"/>
</dbReference>
<protein>
    <recommendedName>
        <fullName evidence="1">UDP-N-acetylglucosamine--N-acetylmuramyl-(pentapeptide) pyrophosphoryl-undecaprenol N-acetylglucosamine transferase</fullName>
        <ecNumber evidence="1">2.4.1.227</ecNumber>
    </recommendedName>
    <alternativeName>
        <fullName evidence="1">Undecaprenyl-PP-MurNAc-pentapeptide-UDPGlcNAc GlcNAc transferase</fullName>
    </alternativeName>
</protein>
<proteinExistence type="inferred from homology"/>
<feature type="chain" id="PRO_1000057256" description="UDP-N-acetylglucosamine--N-acetylmuramyl-(pentapeptide) pyrophosphoryl-undecaprenol N-acetylglucosamine transferase">
    <location>
        <begin position="1"/>
        <end position="354"/>
    </location>
</feature>
<feature type="binding site" evidence="1">
    <location>
        <begin position="15"/>
        <end position="17"/>
    </location>
    <ligand>
        <name>UDP-N-acetyl-alpha-D-glucosamine</name>
        <dbReference type="ChEBI" id="CHEBI:57705"/>
    </ligand>
</feature>
<feature type="binding site" evidence="1">
    <location>
        <position position="127"/>
    </location>
    <ligand>
        <name>UDP-N-acetyl-alpha-D-glucosamine</name>
        <dbReference type="ChEBI" id="CHEBI:57705"/>
    </ligand>
</feature>
<feature type="binding site" evidence="1">
    <location>
        <position position="163"/>
    </location>
    <ligand>
        <name>UDP-N-acetyl-alpha-D-glucosamine</name>
        <dbReference type="ChEBI" id="CHEBI:57705"/>
    </ligand>
</feature>
<feature type="binding site" evidence="1">
    <location>
        <position position="191"/>
    </location>
    <ligand>
        <name>UDP-N-acetyl-alpha-D-glucosamine</name>
        <dbReference type="ChEBI" id="CHEBI:57705"/>
    </ligand>
</feature>
<feature type="binding site" evidence="1">
    <location>
        <position position="244"/>
    </location>
    <ligand>
        <name>UDP-N-acetyl-alpha-D-glucosamine</name>
        <dbReference type="ChEBI" id="CHEBI:57705"/>
    </ligand>
</feature>
<feature type="binding site" evidence="1">
    <location>
        <begin position="263"/>
        <end position="268"/>
    </location>
    <ligand>
        <name>UDP-N-acetyl-alpha-D-glucosamine</name>
        <dbReference type="ChEBI" id="CHEBI:57705"/>
    </ligand>
</feature>
<feature type="binding site" evidence="1">
    <location>
        <position position="288"/>
    </location>
    <ligand>
        <name>UDP-N-acetyl-alpha-D-glucosamine</name>
        <dbReference type="ChEBI" id="CHEBI:57705"/>
    </ligand>
</feature>
<name>MURG_SERP5</name>
<reference key="1">
    <citation type="submission" date="2007-09" db="EMBL/GenBank/DDBJ databases">
        <title>Complete sequence of chromosome of Serratia proteamaculans 568.</title>
        <authorList>
            <consortium name="US DOE Joint Genome Institute"/>
            <person name="Copeland A."/>
            <person name="Lucas S."/>
            <person name="Lapidus A."/>
            <person name="Barry K."/>
            <person name="Glavina del Rio T."/>
            <person name="Dalin E."/>
            <person name="Tice H."/>
            <person name="Pitluck S."/>
            <person name="Chain P."/>
            <person name="Malfatti S."/>
            <person name="Shin M."/>
            <person name="Vergez L."/>
            <person name="Schmutz J."/>
            <person name="Larimer F."/>
            <person name="Land M."/>
            <person name="Hauser L."/>
            <person name="Kyrpides N."/>
            <person name="Kim E."/>
            <person name="Taghavi S."/>
            <person name="Newman L."/>
            <person name="Vangronsveld J."/>
            <person name="van der Lelie D."/>
            <person name="Richardson P."/>
        </authorList>
    </citation>
    <scope>NUCLEOTIDE SEQUENCE [LARGE SCALE GENOMIC DNA]</scope>
    <source>
        <strain>568</strain>
    </source>
</reference>
<comment type="function">
    <text evidence="1">Cell wall formation. Catalyzes the transfer of a GlcNAc subunit on undecaprenyl-pyrophosphoryl-MurNAc-pentapeptide (lipid intermediate I) to form undecaprenyl-pyrophosphoryl-MurNAc-(pentapeptide)GlcNAc (lipid intermediate II).</text>
</comment>
<comment type="catalytic activity">
    <reaction evidence="1">
        <text>di-trans,octa-cis-undecaprenyl diphospho-N-acetyl-alpha-D-muramoyl-L-alanyl-D-glutamyl-meso-2,6-diaminopimeloyl-D-alanyl-D-alanine + UDP-N-acetyl-alpha-D-glucosamine = di-trans,octa-cis-undecaprenyl diphospho-[N-acetyl-alpha-D-glucosaminyl-(1-&gt;4)]-N-acetyl-alpha-D-muramoyl-L-alanyl-D-glutamyl-meso-2,6-diaminopimeloyl-D-alanyl-D-alanine + UDP + H(+)</text>
        <dbReference type="Rhea" id="RHEA:31227"/>
        <dbReference type="ChEBI" id="CHEBI:15378"/>
        <dbReference type="ChEBI" id="CHEBI:57705"/>
        <dbReference type="ChEBI" id="CHEBI:58223"/>
        <dbReference type="ChEBI" id="CHEBI:61387"/>
        <dbReference type="ChEBI" id="CHEBI:61388"/>
        <dbReference type="EC" id="2.4.1.227"/>
    </reaction>
</comment>
<comment type="pathway">
    <text evidence="1">Cell wall biogenesis; peptidoglycan biosynthesis.</text>
</comment>
<comment type="subcellular location">
    <subcellularLocation>
        <location evidence="1">Cell inner membrane</location>
        <topology evidence="1">Peripheral membrane protein</topology>
        <orientation evidence="1">Cytoplasmic side</orientation>
    </subcellularLocation>
</comment>
<comment type="similarity">
    <text evidence="1">Belongs to the glycosyltransferase 28 family. MurG subfamily.</text>
</comment>
<accession>A8G9S7</accession>
<keyword id="KW-0131">Cell cycle</keyword>
<keyword id="KW-0132">Cell division</keyword>
<keyword id="KW-0997">Cell inner membrane</keyword>
<keyword id="KW-1003">Cell membrane</keyword>
<keyword id="KW-0133">Cell shape</keyword>
<keyword id="KW-0961">Cell wall biogenesis/degradation</keyword>
<keyword id="KW-0328">Glycosyltransferase</keyword>
<keyword id="KW-0472">Membrane</keyword>
<keyword id="KW-0573">Peptidoglycan synthesis</keyword>
<keyword id="KW-0808">Transferase</keyword>
<sequence>MSGKPKRLMVMAGGTGGHVFPGLAVAHHLMAQGWQVRWLGTADRMEADLVPKHGIEIDFIRISGLRGKGLKAQLSAPLRIWHAVRQAKAIMRNYQPDVVLGMGGYVSGPGGLAAWLCGIPVVLHEQNGIAGLTNRWLARIAKTVLQAFPGAFPNAEVVGNPVRTDVLALPLPAERLIGREGPIRVLVIGGSQGARVLNQTVPEVAARLGDKITLWHQVGKGALENVLRDYERVGQTQHKVAEFIDDMAAAYAWADVVVCRSGALTVSEIAAAGLPAIFVPFQHKDRQQYWNARPLEEAGAAKIIEQPQFNADVVAELLAGWDRPTLLAMAEKARAVAIPDATERVAAELVRVAK</sequence>
<evidence type="ECO:0000255" key="1">
    <source>
        <dbReference type="HAMAP-Rule" id="MF_00033"/>
    </source>
</evidence>